<evidence type="ECO:0000255" key="1">
    <source>
        <dbReference type="PROSITE-ProRule" id="PRU00692"/>
    </source>
</evidence>
<evidence type="ECO:0000269" key="2">
    <source>
    </source>
</evidence>
<evidence type="ECO:0000305" key="3"/>
<evidence type="ECO:0000305" key="4">
    <source>
    </source>
</evidence>
<sequence>MWRRIVSSHLKSISAVGSCAAPSCRHAVVESTHLSLSTRASSIPAYSSIFSRLIGSAAADTAVKKRVEDVMPIATGHEKEELQAELEGRKLDDIDFPEGPFGTKEAPAVVKSYYDMRIVGCPGGEGEDEHDVVWFWLEKGKSFECPVCTQYFKLEVVGPGGPPDGHGDDHH</sequence>
<reference key="1">
    <citation type="journal article" date="2000" name="Nature">
        <title>Sequence and analysis of chromosome 1 of the plant Arabidopsis thaliana.</title>
        <authorList>
            <person name="Theologis A."/>
            <person name="Ecker J.R."/>
            <person name="Palm C.J."/>
            <person name="Federspiel N.A."/>
            <person name="Kaul S."/>
            <person name="White O."/>
            <person name="Alonso J."/>
            <person name="Altafi H."/>
            <person name="Araujo R."/>
            <person name="Bowman C.L."/>
            <person name="Brooks S.Y."/>
            <person name="Buehler E."/>
            <person name="Chan A."/>
            <person name="Chao Q."/>
            <person name="Chen H."/>
            <person name="Cheuk R.F."/>
            <person name="Chin C.W."/>
            <person name="Chung M.K."/>
            <person name="Conn L."/>
            <person name="Conway A.B."/>
            <person name="Conway A.R."/>
            <person name="Creasy T.H."/>
            <person name="Dewar K."/>
            <person name="Dunn P."/>
            <person name="Etgu P."/>
            <person name="Feldblyum T.V."/>
            <person name="Feng J.-D."/>
            <person name="Fong B."/>
            <person name="Fujii C.Y."/>
            <person name="Gill J.E."/>
            <person name="Goldsmith A.D."/>
            <person name="Haas B."/>
            <person name="Hansen N.F."/>
            <person name="Hughes B."/>
            <person name="Huizar L."/>
            <person name="Hunter J.L."/>
            <person name="Jenkins J."/>
            <person name="Johnson-Hopson C."/>
            <person name="Khan S."/>
            <person name="Khaykin E."/>
            <person name="Kim C.J."/>
            <person name="Koo H.L."/>
            <person name="Kremenetskaia I."/>
            <person name="Kurtz D.B."/>
            <person name="Kwan A."/>
            <person name="Lam B."/>
            <person name="Langin-Hooper S."/>
            <person name="Lee A."/>
            <person name="Lee J.M."/>
            <person name="Lenz C.A."/>
            <person name="Li J.H."/>
            <person name="Li Y.-P."/>
            <person name="Lin X."/>
            <person name="Liu S.X."/>
            <person name="Liu Z.A."/>
            <person name="Luros J.S."/>
            <person name="Maiti R."/>
            <person name="Marziali A."/>
            <person name="Militscher J."/>
            <person name="Miranda M."/>
            <person name="Nguyen M."/>
            <person name="Nierman W.C."/>
            <person name="Osborne B.I."/>
            <person name="Pai G."/>
            <person name="Peterson J."/>
            <person name="Pham P.K."/>
            <person name="Rizzo M."/>
            <person name="Rooney T."/>
            <person name="Rowley D."/>
            <person name="Sakano H."/>
            <person name="Salzberg S.L."/>
            <person name="Schwartz J.R."/>
            <person name="Shinn P."/>
            <person name="Southwick A.M."/>
            <person name="Sun H."/>
            <person name="Tallon L.J."/>
            <person name="Tambunga G."/>
            <person name="Toriumi M.J."/>
            <person name="Town C.D."/>
            <person name="Utterback T."/>
            <person name="Van Aken S."/>
            <person name="Vaysberg M."/>
            <person name="Vysotskaia V.S."/>
            <person name="Walker M."/>
            <person name="Wu D."/>
            <person name="Yu G."/>
            <person name="Fraser C.M."/>
            <person name="Venter J.C."/>
            <person name="Davis R.W."/>
        </authorList>
    </citation>
    <scope>NUCLEOTIDE SEQUENCE [LARGE SCALE GENOMIC DNA]</scope>
    <source>
        <strain>cv. Columbia</strain>
    </source>
</reference>
<reference key="2">
    <citation type="journal article" date="2017" name="Plant J.">
        <title>Araport11: a complete reannotation of the Arabidopsis thaliana reference genome.</title>
        <authorList>
            <person name="Cheng C.Y."/>
            <person name="Krishnakumar V."/>
            <person name="Chan A.P."/>
            <person name="Thibaud-Nissen F."/>
            <person name="Schobel S."/>
            <person name="Town C.D."/>
        </authorList>
    </citation>
    <scope>GENOME REANNOTATION</scope>
    <source>
        <strain>cv. Columbia</strain>
    </source>
</reference>
<reference key="3">
    <citation type="journal article" date="2003" name="Science">
        <title>Empirical analysis of transcriptional activity in the Arabidopsis genome.</title>
        <authorList>
            <person name="Yamada K."/>
            <person name="Lim J."/>
            <person name="Dale J.M."/>
            <person name="Chen H."/>
            <person name="Shinn P."/>
            <person name="Palm C.J."/>
            <person name="Southwick A.M."/>
            <person name="Wu H.C."/>
            <person name="Kim C.J."/>
            <person name="Nguyen M."/>
            <person name="Pham P.K."/>
            <person name="Cheuk R.F."/>
            <person name="Karlin-Newmann G."/>
            <person name="Liu S.X."/>
            <person name="Lam B."/>
            <person name="Sakano H."/>
            <person name="Wu T."/>
            <person name="Yu G."/>
            <person name="Miranda M."/>
            <person name="Quach H.L."/>
            <person name="Tripp M."/>
            <person name="Chang C.H."/>
            <person name="Lee J.M."/>
            <person name="Toriumi M.J."/>
            <person name="Chan M.M."/>
            <person name="Tang C.C."/>
            <person name="Onodera C.S."/>
            <person name="Deng J.M."/>
            <person name="Akiyama K."/>
            <person name="Ansari Y."/>
            <person name="Arakawa T."/>
            <person name="Banh J."/>
            <person name="Banno F."/>
            <person name="Bowser L."/>
            <person name="Brooks S.Y."/>
            <person name="Carninci P."/>
            <person name="Chao Q."/>
            <person name="Choy N."/>
            <person name="Enju A."/>
            <person name="Goldsmith A.D."/>
            <person name="Gurjal M."/>
            <person name="Hansen N.F."/>
            <person name="Hayashizaki Y."/>
            <person name="Johnson-Hopson C."/>
            <person name="Hsuan V.W."/>
            <person name="Iida K."/>
            <person name="Karnes M."/>
            <person name="Khan S."/>
            <person name="Koesema E."/>
            <person name="Ishida J."/>
            <person name="Jiang P.X."/>
            <person name="Jones T."/>
            <person name="Kawai J."/>
            <person name="Kamiya A."/>
            <person name="Meyers C."/>
            <person name="Nakajima M."/>
            <person name="Narusaka M."/>
            <person name="Seki M."/>
            <person name="Sakurai T."/>
            <person name="Satou M."/>
            <person name="Tamse R."/>
            <person name="Vaysberg M."/>
            <person name="Wallender E.K."/>
            <person name="Wong C."/>
            <person name="Yamamura Y."/>
            <person name="Yuan S."/>
            <person name="Shinozaki K."/>
            <person name="Davis R.W."/>
            <person name="Theologis A."/>
            <person name="Ecker J.R."/>
        </authorList>
    </citation>
    <scope>NUCLEOTIDE SEQUENCE [LARGE SCALE MRNA]</scope>
    <source>
        <strain>cv. Columbia</strain>
    </source>
</reference>
<reference key="4">
    <citation type="submission" date="2006-07" db="EMBL/GenBank/DDBJ databases">
        <title>Large-scale analysis of RIKEN Arabidopsis full-length (RAFL) cDNAs.</title>
        <authorList>
            <person name="Totoki Y."/>
            <person name="Seki M."/>
            <person name="Ishida J."/>
            <person name="Nakajima M."/>
            <person name="Enju A."/>
            <person name="Kamiya A."/>
            <person name="Narusaka M."/>
            <person name="Shin-i T."/>
            <person name="Nakagawa M."/>
            <person name="Sakamoto N."/>
            <person name="Oishi K."/>
            <person name="Kohara Y."/>
            <person name="Kobayashi M."/>
            <person name="Toyoda A."/>
            <person name="Sakaki Y."/>
            <person name="Sakurai T."/>
            <person name="Iida K."/>
            <person name="Akiyama K."/>
            <person name="Satou M."/>
            <person name="Toyoda T."/>
            <person name="Konagaya A."/>
            <person name="Carninci P."/>
            <person name="Kawai J."/>
            <person name="Hayashizaki Y."/>
            <person name="Shinozaki K."/>
        </authorList>
    </citation>
    <scope>NUCLEOTIDE SEQUENCE [LARGE SCALE MRNA]</scope>
    <source>
        <strain>cv. Columbia</strain>
    </source>
</reference>
<reference key="5">
    <citation type="submission" date="2002-03" db="EMBL/GenBank/DDBJ databases">
        <title>Full-length cDNA from Arabidopsis thaliana.</title>
        <authorList>
            <person name="Brover V.V."/>
            <person name="Troukhan M.E."/>
            <person name="Alexandrov N.A."/>
            <person name="Lu Y.-P."/>
            <person name="Flavell R.B."/>
            <person name="Feldmann K.A."/>
        </authorList>
    </citation>
    <scope>NUCLEOTIDE SEQUENCE [LARGE SCALE MRNA]</scope>
</reference>
<reference key="6">
    <citation type="journal article" date="2015" name="J. Exp. Bot.">
        <title>Identification of cleavage sites and substrate proteins for two mitochondrial intermediate peptidases in Arabidopsis thaliana.</title>
        <authorList>
            <person name="Carrie C."/>
            <person name="Venne A.S."/>
            <person name="Zahedi R.P."/>
            <person name="Soll J."/>
        </authorList>
    </citation>
    <scope>IDENTIFICATION BY MASS SPECTROMETRY</scope>
    <scope>CLEAVAGE OF TRANSIT PEPTIDE AFTER ILE-54</scope>
</reference>
<accession>Q9SSB8</accession>
<accession>Q8LBW7</accession>
<dbReference type="EMBL" id="AC009322">
    <property type="protein sequence ID" value="AAD55490.1"/>
    <property type="molecule type" value="Genomic_DNA"/>
</dbReference>
<dbReference type="EMBL" id="CP002684">
    <property type="protein sequence ID" value="AEE36373.1"/>
    <property type="molecule type" value="Genomic_DNA"/>
</dbReference>
<dbReference type="EMBL" id="BT006403">
    <property type="protein sequence ID" value="AAP21211.1"/>
    <property type="molecule type" value="mRNA"/>
</dbReference>
<dbReference type="EMBL" id="AK227631">
    <property type="protein sequence ID" value="BAE99622.1"/>
    <property type="molecule type" value="mRNA"/>
</dbReference>
<dbReference type="EMBL" id="AY086953">
    <property type="protein sequence ID" value="AAM64516.1"/>
    <property type="molecule type" value="mRNA"/>
</dbReference>
<dbReference type="PIR" id="H96833">
    <property type="entry name" value="H96833"/>
</dbReference>
<dbReference type="RefSeq" id="NP_178140.1">
    <property type="nucleotide sequence ID" value="NM_106672.5"/>
</dbReference>
<dbReference type="SMR" id="Q9SSB8"/>
<dbReference type="FunCoup" id="Q9SSB8">
    <property type="interactions" value="2028"/>
</dbReference>
<dbReference type="IntAct" id="Q9SSB8">
    <property type="interactions" value="3"/>
</dbReference>
<dbReference type="STRING" id="3702.Q9SSB8"/>
<dbReference type="MetOSite" id="Q9SSB8"/>
<dbReference type="PaxDb" id="3702-AT1G80230.1"/>
<dbReference type="ProteomicsDB" id="220423"/>
<dbReference type="EnsemblPlants" id="AT1G80230.1">
    <property type="protein sequence ID" value="AT1G80230.1"/>
    <property type="gene ID" value="AT1G80230"/>
</dbReference>
<dbReference type="GeneID" id="844363"/>
<dbReference type="Gramene" id="AT1G80230.1">
    <property type="protein sequence ID" value="AT1G80230.1"/>
    <property type="gene ID" value="AT1G80230"/>
</dbReference>
<dbReference type="KEGG" id="ath:AT1G80230"/>
<dbReference type="Araport" id="AT1G80230"/>
<dbReference type="TAIR" id="AT1G80230"/>
<dbReference type="eggNOG" id="KOG3352">
    <property type="taxonomic scope" value="Eukaryota"/>
</dbReference>
<dbReference type="HOGENOM" id="CLU_108246_0_0_1"/>
<dbReference type="InParanoid" id="Q9SSB8"/>
<dbReference type="OMA" id="CISQAPR"/>
<dbReference type="PhylomeDB" id="Q9SSB8"/>
<dbReference type="BioCyc" id="ARA:AT1G80230-MONOMER"/>
<dbReference type="BioCyc" id="MetaCyc:AT1G80230-MONOMER"/>
<dbReference type="PRO" id="PR:Q9SSB8"/>
<dbReference type="Proteomes" id="UP000006548">
    <property type="component" value="Chromosome 1"/>
</dbReference>
<dbReference type="ExpressionAtlas" id="Q9SSB8">
    <property type="expression patterns" value="baseline and differential"/>
</dbReference>
<dbReference type="GO" id="GO:0005743">
    <property type="term" value="C:mitochondrial inner membrane"/>
    <property type="evidence" value="ECO:0007669"/>
    <property type="project" value="UniProtKB-SubCell"/>
</dbReference>
<dbReference type="GO" id="GO:0005739">
    <property type="term" value="C:mitochondrion"/>
    <property type="evidence" value="ECO:0007005"/>
    <property type="project" value="TAIR"/>
</dbReference>
<dbReference type="GO" id="GO:0045277">
    <property type="term" value="C:respiratory chain complex IV"/>
    <property type="evidence" value="ECO:0007669"/>
    <property type="project" value="InterPro"/>
</dbReference>
<dbReference type="GO" id="GO:0046872">
    <property type="term" value="F:metal ion binding"/>
    <property type="evidence" value="ECO:0007669"/>
    <property type="project" value="UniProtKB-KW"/>
</dbReference>
<dbReference type="GO" id="GO:0006123">
    <property type="term" value="P:mitochondrial electron transport, cytochrome c to oxygen"/>
    <property type="evidence" value="ECO:0007669"/>
    <property type="project" value="InterPro"/>
</dbReference>
<dbReference type="CDD" id="cd00924">
    <property type="entry name" value="Cyt_c_Oxidase_Vb"/>
    <property type="match status" value="1"/>
</dbReference>
<dbReference type="FunFam" id="2.60.11.10:FF:000002">
    <property type="entry name" value="Cytochrome c oxidase subunit Vb"/>
    <property type="match status" value="1"/>
</dbReference>
<dbReference type="Gene3D" id="2.60.11.10">
    <property type="entry name" value="Cytochrome c oxidase, subunit Vb"/>
    <property type="match status" value="1"/>
</dbReference>
<dbReference type="InterPro" id="IPR002124">
    <property type="entry name" value="Cyt_c_oxidase_su5b"/>
</dbReference>
<dbReference type="InterPro" id="IPR036972">
    <property type="entry name" value="Cyt_c_oxidase_su5b_sf"/>
</dbReference>
<dbReference type="PANTHER" id="PTHR10122:SF0">
    <property type="entry name" value="CYTOCHROME C OXIDASE SUBUNIT 5B, ISOFORM A-RELATED"/>
    <property type="match status" value="1"/>
</dbReference>
<dbReference type="PANTHER" id="PTHR10122">
    <property type="entry name" value="CYTOCHROME C OXIDASE SUBUNIT 5B, MITOCHONDRIAL"/>
    <property type="match status" value="1"/>
</dbReference>
<dbReference type="Pfam" id="PF01215">
    <property type="entry name" value="COX5B"/>
    <property type="match status" value="1"/>
</dbReference>
<dbReference type="SUPFAM" id="SSF57802">
    <property type="entry name" value="Rubredoxin-like"/>
    <property type="match status" value="1"/>
</dbReference>
<dbReference type="PROSITE" id="PS51359">
    <property type="entry name" value="COX5B_2"/>
    <property type="match status" value="1"/>
</dbReference>
<feature type="transit peptide" description="Mitochondrion" evidence="2">
    <location>
        <begin position="1"/>
        <end position="54"/>
    </location>
</feature>
<feature type="chain" id="PRO_0000412472" description="Cytochrome c oxidase subunit 5b-2, mitochondrial">
    <location>
        <begin position="55"/>
        <end position="171"/>
    </location>
</feature>
<feature type="binding site" evidence="1">
    <location>
        <position position="121"/>
    </location>
    <ligand>
        <name>Zn(2+)</name>
        <dbReference type="ChEBI" id="CHEBI:29105"/>
    </ligand>
</feature>
<feature type="binding site" evidence="1">
    <location>
        <position position="145"/>
    </location>
    <ligand>
        <name>Zn(2+)</name>
        <dbReference type="ChEBI" id="CHEBI:29105"/>
    </ligand>
</feature>
<feature type="binding site" evidence="1">
    <location>
        <position position="148"/>
    </location>
    <ligand>
        <name>Zn(2+)</name>
        <dbReference type="ChEBI" id="CHEBI:29105"/>
    </ligand>
</feature>
<feature type="sequence conflict" description="In Ref. 5; AAM64516." evidence="3" ref="5">
    <original>L</original>
    <variation>Q</variation>
    <location>
        <position position="53"/>
    </location>
</feature>
<comment type="function">
    <text evidence="1">This protein is one of the nuclear-coded polypeptide chains of cytochrome c oxidase, the terminal oxidase in mitochondrial electron transport.</text>
</comment>
<comment type="subcellular location">
    <subcellularLocation>
        <location evidence="1 4">Mitochondrion inner membrane</location>
    </subcellularLocation>
</comment>
<comment type="similarity">
    <text evidence="3">Belongs to the cytochrome c oxidase subunit 5B (TC 3.D.4.11) family.</text>
</comment>
<gene>
    <name type="primary">COX5B-2</name>
    <name type="ordered locus">At1g80230</name>
    <name type="ORF">F18B13.29</name>
</gene>
<protein>
    <recommendedName>
        <fullName>Cytochrome c oxidase subunit 5b-2, mitochondrial</fullName>
        <shortName>AtCOX5b-2</shortName>
    </recommendedName>
</protein>
<keyword id="KW-0472">Membrane</keyword>
<keyword id="KW-0479">Metal-binding</keyword>
<keyword id="KW-0496">Mitochondrion</keyword>
<keyword id="KW-0999">Mitochondrion inner membrane</keyword>
<keyword id="KW-1185">Reference proteome</keyword>
<keyword id="KW-0809">Transit peptide</keyword>
<keyword id="KW-0862">Zinc</keyword>
<organism>
    <name type="scientific">Arabidopsis thaliana</name>
    <name type="common">Mouse-ear cress</name>
    <dbReference type="NCBI Taxonomy" id="3702"/>
    <lineage>
        <taxon>Eukaryota</taxon>
        <taxon>Viridiplantae</taxon>
        <taxon>Streptophyta</taxon>
        <taxon>Embryophyta</taxon>
        <taxon>Tracheophyta</taxon>
        <taxon>Spermatophyta</taxon>
        <taxon>Magnoliopsida</taxon>
        <taxon>eudicotyledons</taxon>
        <taxon>Gunneridae</taxon>
        <taxon>Pentapetalae</taxon>
        <taxon>rosids</taxon>
        <taxon>malvids</taxon>
        <taxon>Brassicales</taxon>
        <taxon>Brassicaceae</taxon>
        <taxon>Camelineae</taxon>
        <taxon>Arabidopsis</taxon>
    </lineage>
</organism>
<proteinExistence type="evidence at protein level"/>
<name>CX5B2_ARATH</name>